<keyword id="KW-0496">Mitochondrion</keyword>
<keyword id="KW-0539">Nucleus</keyword>
<keyword id="KW-1185">Reference proteome</keyword>
<accession>Q6DCS1</accession>
<protein>
    <recommendedName>
        <fullName>LYR motif-containing protein 4</fullName>
    </recommendedName>
</protein>
<sequence>MSASSRSQVLSLYKIMLRESQRFSSYNYRTYAIRRIRDAFREKKNVDDFLEIETLLHRAKENLNVIQRQVTIGQMYATHKLVIESAEHR</sequence>
<reference key="1">
    <citation type="submission" date="2004-07" db="EMBL/GenBank/DDBJ databases">
        <authorList>
            <consortium name="NIH - Xenopus Gene Collection (XGC) project"/>
        </authorList>
    </citation>
    <scope>NUCLEOTIDE SEQUENCE [LARGE SCALE MRNA]</scope>
    <source>
        <tissue>Embryo</tissue>
    </source>
</reference>
<feature type="chain" id="PRO_0000370335" description="LYR motif-containing protein 4">
    <location>
        <begin position="1"/>
        <end position="89"/>
    </location>
</feature>
<name>LYRM4_XENLA</name>
<comment type="function">
    <text evidence="1">Required for nuclear and mitochondrial iron-sulfur protein biosynthesis.</text>
</comment>
<comment type="pathway">
    <text>Cofactor biosynthesis; iron-sulfur cluster biosynthesis.</text>
</comment>
<comment type="subcellular location">
    <subcellularLocation>
        <location evidence="1">Mitochondrion</location>
    </subcellularLocation>
    <subcellularLocation>
        <location evidence="1">Nucleus</location>
    </subcellularLocation>
</comment>
<comment type="similarity">
    <text evidence="2">Belongs to the complex I LYR family.</text>
</comment>
<dbReference type="EMBL" id="BC077926">
    <property type="protein sequence ID" value="AAH77926.1"/>
    <property type="molecule type" value="mRNA"/>
</dbReference>
<dbReference type="RefSeq" id="NP_001087036.1">
    <property type="nucleotide sequence ID" value="NM_001093567.1"/>
</dbReference>
<dbReference type="RefSeq" id="XP_018122061.1">
    <property type="nucleotide sequence ID" value="XM_018266572.1"/>
</dbReference>
<dbReference type="RefSeq" id="XP_018122062.1">
    <property type="nucleotide sequence ID" value="XM_018266573.1"/>
</dbReference>
<dbReference type="RefSeq" id="XP_018122064.1">
    <property type="nucleotide sequence ID" value="XM_018266575.1"/>
</dbReference>
<dbReference type="RefSeq" id="XP_018122065.1">
    <property type="nucleotide sequence ID" value="XM_018266576.1"/>
</dbReference>
<dbReference type="SMR" id="Q6DCS1"/>
<dbReference type="DNASU" id="446871"/>
<dbReference type="GeneID" id="446871"/>
<dbReference type="KEGG" id="xla:446871"/>
<dbReference type="AGR" id="Xenbase:XB-GENE-6255095"/>
<dbReference type="CTD" id="446871"/>
<dbReference type="Xenbase" id="XB-GENE-6255095">
    <property type="gene designation" value="lyrm4.L"/>
</dbReference>
<dbReference type="OMA" id="DAFCENR"/>
<dbReference type="OrthoDB" id="275715at2759"/>
<dbReference type="UniPathway" id="UPA00266"/>
<dbReference type="Proteomes" id="UP000186698">
    <property type="component" value="Chromosome 6L"/>
</dbReference>
<dbReference type="Bgee" id="446871">
    <property type="expression patterns" value="Expressed in egg cell and 19 other cell types or tissues"/>
</dbReference>
<dbReference type="GO" id="GO:1990221">
    <property type="term" value="C:L-cysteine desulfurase complex"/>
    <property type="evidence" value="ECO:0000318"/>
    <property type="project" value="GO_Central"/>
</dbReference>
<dbReference type="GO" id="GO:0005739">
    <property type="term" value="C:mitochondrion"/>
    <property type="evidence" value="ECO:0000318"/>
    <property type="project" value="GO_Central"/>
</dbReference>
<dbReference type="GO" id="GO:0005634">
    <property type="term" value="C:nucleus"/>
    <property type="evidence" value="ECO:0007669"/>
    <property type="project" value="UniProtKB-SubCell"/>
</dbReference>
<dbReference type="GO" id="GO:0016226">
    <property type="term" value="P:iron-sulfur cluster assembly"/>
    <property type="evidence" value="ECO:0000318"/>
    <property type="project" value="GO_Central"/>
</dbReference>
<dbReference type="CDD" id="cd20264">
    <property type="entry name" value="Complex1_LYR_LYRM4"/>
    <property type="match status" value="1"/>
</dbReference>
<dbReference type="InterPro" id="IPR008011">
    <property type="entry name" value="Complex1_LYR_dom"/>
</dbReference>
<dbReference type="InterPro" id="IPR045297">
    <property type="entry name" value="Complex1_LYR_LYRM4"/>
</dbReference>
<dbReference type="InterPro" id="IPR051522">
    <property type="entry name" value="ISC_assembly_LYR"/>
</dbReference>
<dbReference type="PANTHER" id="PTHR13166:SF7">
    <property type="entry name" value="LYR MOTIF-CONTAINING PROTEIN 4"/>
    <property type="match status" value="1"/>
</dbReference>
<dbReference type="PANTHER" id="PTHR13166">
    <property type="entry name" value="PROTEIN C6ORF149"/>
    <property type="match status" value="1"/>
</dbReference>
<dbReference type="Pfam" id="PF05347">
    <property type="entry name" value="Complex1_LYR"/>
    <property type="match status" value="1"/>
</dbReference>
<proteinExistence type="inferred from homology"/>
<evidence type="ECO:0000250" key="1"/>
<evidence type="ECO:0000305" key="2"/>
<gene>
    <name type="primary">lyrm4</name>
    <name type="synonym">isd11</name>
</gene>
<organism>
    <name type="scientific">Xenopus laevis</name>
    <name type="common">African clawed frog</name>
    <dbReference type="NCBI Taxonomy" id="8355"/>
    <lineage>
        <taxon>Eukaryota</taxon>
        <taxon>Metazoa</taxon>
        <taxon>Chordata</taxon>
        <taxon>Craniata</taxon>
        <taxon>Vertebrata</taxon>
        <taxon>Euteleostomi</taxon>
        <taxon>Amphibia</taxon>
        <taxon>Batrachia</taxon>
        <taxon>Anura</taxon>
        <taxon>Pipoidea</taxon>
        <taxon>Pipidae</taxon>
        <taxon>Xenopodinae</taxon>
        <taxon>Xenopus</taxon>
        <taxon>Xenopus</taxon>
    </lineage>
</organism>